<name>METL8_HUMAN</name>
<comment type="function">
    <text evidence="5 7 8 9">Mitochondrial S-adenosyl-L-methionine-dependent methyltransferase that mediates N(3)-methylcytidine modification of residue 32 of the tRNA anticodon loop of mitochondrial tRNA(Ser)(UCN) and tRNA(Thr) (PubMed:34774131, PubMed:35017528). N(3)-methylcytidine methylation modification regulates mitochondrial translation efficiency and is required for activity of the respiratory chain (PubMed:34774131, PubMed:35017528). N(3)-methylcytidine methylation of mitochondrial tRNA(Ser)(UCN) requires the formation of N(6)-dimethylallyladenosine(37) (i6A37) by TRIT1 as prerequisite (PubMed:34774131, PubMed:35017528). May also mediate N(3)-methylcytidine modification of mRNAs (PubMed:28655767). The existence of N(3)-methylcytidine modification on mRNAs is however unclear, and additional evidences are required to confirm the role of the N(3)-methylcytidine-specific mRNA methyltransferase activity of METTL8 in vivo (PubMed:33313824, PubMed:34774131).</text>
</comment>
<comment type="catalytic activity">
    <reaction evidence="8 9">
        <text>cytidine(32) in tRNA(Ser) + S-adenosyl-L-methionine = N(3)-methylcytidine(32) in tRNA(Ser) + S-adenosyl-L-homocysteine + H(+)</text>
        <dbReference type="Rhea" id="RHEA:50956"/>
        <dbReference type="Rhea" id="RHEA-COMP:12849"/>
        <dbReference type="Rhea" id="RHEA-COMP:12851"/>
        <dbReference type="ChEBI" id="CHEBI:15378"/>
        <dbReference type="ChEBI" id="CHEBI:57856"/>
        <dbReference type="ChEBI" id="CHEBI:59789"/>
        <dbReference type="ChEBI" id="CHEBI:74894"/>
        <dbReference type="ChEBI" id="CHEBI:82748"/>
    </reaction>
    <physiologicalReaction direction="left-to-right" evidence="8 9">
        <dbReference type="Rhea" id="RHEA:50957"/>
    </physiologicalReaction>
</comment>
<comment type="catalytic activity">
    <reaction evidence="8 9">
        <text>cytidine(32) in tRNA(Thr) + S-adenosyl-L-methionine = N(3)-methylcytidine(32) in tRNA(Thr) + S-adenosyl-L-homocysteine + H(+)</text>
        <dbReference type="Rhea" id="RHEA:50960"/>
        <dbReference type="Rhea" id="RHEA-COMP:12850"/>
        <dbReference type="Rhea" id="RHEA-COMP:12852"/>
        <dbReference type="ChEBI" id="CHEBI:15378"/>
        <dbReference type="ChEBI" id="CHEBI:57856"/>
        <dbReference type="ChEBI" id="CHEBI:59789"/>
        <dbReference type="ChEBI" id="CHEBI:74894"/>
        <dbReference type="ChEBI" id="CHEBI:82748"/>
    </reaction>
    <physiologicalReaction direction="left-to-right" evidence="8 9">
        <dbReference type="Rhea" id="RHEA:50961"/>
    </physiologicalReaction>
</comment>
<comment type="catalytic activity">
    <reaction evidence="13">
        <text>a cytidine in mRNA + S-adenosyl-L-methionine = an N(3)-methylcytidine in mRNA + S-adenosyl-L-homocysteine + H(+)</text>
        <dbReference type="Rhea" id="RHEA:60916"/>
        <dbReference type="Rhea" id="RHEA-COMP:15145"/>
        <dbReference type="Rhea" id="RHEA-COMP:15713"/>
        <dbReference type="ChEBI" id="CHEBI:15378"/>
        <dbReference type="ChEBI" id="CHEBI:57856"/>
        <dbReference type="ChEBI" id="CHEBI:59789"/>
        <dbReference type="ChEBI" id="CHEBI:74894"/>
        <dbReference type="ChEBI" id="CHEBI:82748"/>
    </reaction>
    <physiologicalReaction direction="left-to-right" evidence="13">
        <dbReference type="Rhea" id="RHEA:60917"/>
    </physiologicalReaction>
</comment>
<comment type="subunit">
    <text evidence="1">Interacts with EP300.</text>
</comment>
<comment type="subcellular location">
    <subcellularLocation>
        <location evidence="8 9">Mitochondrion</location>
    </subcellularLocation>
    <text evidence="8">Mitochondrial protein: the cytoplasmic or nuclear localization observed by some groups is either the result of an incorrect localization caused by N-terminal tagging that interferes with mitochondrial targeting, or splice isoforms that lack the N-terminal mitochondrial transit sequence.</text>
</comment>
<comment type="alternative products">
    <event type="alternative splicing"/>
    <isoform>
        <id>Q9H825-1</id>
        <name>1</name>
        <sequence type="displayed"/>
    </isoform>
    <isoform>
        <id>Q9H825-2</id>
        <name>2</name>
        <sequence type="described" ref="VSP_029514"/>
    </isoform>
</comment>
<comment type="similarity">
    <text evidence="12">Belongs to the methyltransferase superfamily. METL family.</text>
</comment>
<comment type="caution">
    <text evidence="7 8">The existence of N(3)-methylcytidine on mRNA is unclear (PubMed:33313824, PubMed:34774131). A report was unable to detect N(3)-methylcytidine formation in mammalian mRNAs using a nucleotide-resolution sequencing approach (PubMed:33313824). According to another publication, METTL8 has no activity on mRNAs and specifically methylates mitochondrial tRNAs (PubMed:34774131).</text>
</comment>
<comment type="caution">
    <text evidence="6 8">A publication reported some nucleolar localization (PubMed:32199293). However, the protein used in this publication used a N-terminal tag, which possibly interferes with the mitochondrial targeting (PubMed:34774131).</text>
</comment>
<comment type="sequence caution" evidence="12">
    <conflict type="erroneous initiation">
        <sequence resource="EMBL-CDS" id="AAH25250"/>
    </conflict>
</comment>
<comment type="sequence caution" evidence="12">
    <conflict type="erroneous gene model prediction">
        <sequence resource="EMBL-CDS" id="AAX93077"/>
    </conflict>
</comment>
<reference key="1">
    <citation type="journal article" date="2004" name="Nat. Genet.">
        <title>Complete sequencing and characterization of 21,243 full-length human cDNAs.</title>
        <authorList>
            <person name="Ota T."/>
            <person name="Suzuki Y."/>
            <person name="Nishikawa T."/>
            <person name="Otsuki T."/>
            <person name="Sugiyama T."/>
            <person name="Irie R."/>
            <person name="Wakamatsu A."/>
            <person name="Hayashi K."/>
            <person name="Sato H."/>
            <person name="Nagai K."/>
            <person name="Kimura K."/>
            <person name="Makita H."/>
            <person name="Sekine M."/>
            <person name="Obayashi M."/>
            <person name="Nishi T."/>
            <person name="Shibahara T."/>
            <person name="Tanaka T."/>
            <person name="Ishii S."/>
            <person name="Yamamoto J."/>
            <person name="Saito K."/>
            <person name="Kawai Y."/>
            <person name="Isono Y."/>
            <person name="Nakamura Y."/>
            <person name="Nagahari K."/>
            <person name="Murakami K."/>
            <person name="Yasuda T."/>
            <person name="Iwayanagi T."/>
            <person name="Wagatsuma M."/>
            <person name="Shiratori A."/>
            <person name="Sudo H."/>
            <person name="Hosoiri T."/>
            <person name="Kaku Y."/>
            <person name="Kodaira H."/>
            <person name="Kondo H."/>
            <person name="Sugawara M."/>
            <person name="Takahashi M."/>
            <person name="Kanda K."/>
            <person name="Yokoi T."/>
            <person name="Furuya T."/>
            <person name="Kikkawa E."/>
            <person name="Omura Y."/>
            <person name="Abe K."/>
            <person name="Kamihara K."/>
            <person name="Katsuta N."/>
            <person name="Sato K."/>
            <person name="Tanikawa M."/>
            <person name="Yamazaki M."/>
            <person name="Ninomiya K."/>
            <person name="Ishibashi T."/>
            <person name="Yamashita H."/>
            <person name="Murakawa K."/>
            <person name="Fujimori K."/>
            <person name="Tanai H."/>
            <person name="Kimata M."/>
            <person name="Watanabe M."/>
            <person name="Hiraoka S."/>
            <person name="Chiba Y."/>
            <person name="Ishida S."/>
            <person name="Ono Y."/>
            <person name="Takiguchi S."/>
            <person name="Watanabe S."/>
            <person name="Yosida M."/>
            <person name="Hotuta T."/>
            <person name="Kusano J."/>
            <person name="Kanehori K."/>
            <person name="Takahashi-Fujii A."/>
            <person name="Hara H."/>
            <person name="Tanase T.-O."/>
            <person name="Nomura Y."/>
            <person name="Togiya S."/>
            <person name="Komai F."/>
            <person name="Hara R."/>
            <person name="Takeuchi K."/>
            <person name="Arita M."/>
            <person name="Imose N."/>
            <person name="Musashino K."/>
            <person name="Yuuki H."/>
            <person name="Oshima A."/>
            <person name="Sasaki N."/>
            <person name="Aotsuka S."/>
            <person name="Yoshikawa Y."/>
            <person name="Matsunawa H."/>
            <person name="Ichihara T."/>
            <person name="Shiohata N."/>
            <person name="Sano S."/>
            <person name="Moriya S."/>
            <person name="Momiyama H."/>
            <person name="Satoh N."/>
            <person name="Takami S."/>
            <person name="Terashima Y."/>
            <person name="Suzuki O."/>
            <person name="Nakagawa S."/>
            <person name="Senoh A."/>
            <person name="Mizoguchi H."/>
            <person name="Goto Y."/>
            <person name="Shimizu F."/>
            <person name="Wakebe H."/>
            <person name="Hishigaki H."/>
            <person name="Watanabe T."/>
            <person name="Sugiyama A."/>
            <person name="Takemoto M."/>
            <person name="Kawakami B."/>
            <person name="Yamazaki M."/>
            <person name="Watanabe K."/>
            <person name="Kumagai A."/>
            <person name="Itakura S."/>
            <person name="Fukuzumi Y."/>
            <person name="Fujimori Y."/>
            <person name="Komiyama M."/>
            <person name="Tashiro H."/>
            <person name="Tanigami A."/>
            <person name="Fujiwara T."/>
            <person name="Ono T."/>
            <person name="Yamada K."/>
            <person name="Fujii Y."/>
            <person name="Ozaki K."/>
            <person name="Hirao M."/>
            <person name="Ohmori Y."/>
            <person name="Kawabata A."/>
            <person name="Hikiji T."/>
            <person name="Kobatake N."/>
            <person name="Inagaki H."/>
            <person name="Ikema Y."/>
            <person name="Okamoto S."/>
            <person name="Okitani R."/>
            <person name="Kawakami T."/>
            <person name="Noguchi S."/>
            <person name="Itoh T."/>
            <person name="Shigeta K."/>
            <person name="Senba T."/>
            <person name="Matsumura K."/>
            <person name="Nakajima Y."/>
            <person name="Mizuno T."/>
            <person name="Morinaga M."/>
            <person name="Sasaki M."/>
            <person name="Togashi T."/>
            <person name="Oyama M."/>
            <person name="Hata H."/>
            <person name="Watanabe M."/>
            <person name="Komatsu T."/>
            <person name="Mizushima-Sugano J."/>
            <person name="Satoh T."/>
            <person name="Shirai Y."/>
            <person name="Takahashi Y."/>
            <person name="Nakagawa K."/>
            <person name="Okumura K."/>
            <person name="Nagase T."/>
            <person name="Nomura N."/>
            <person name="Kikuchi H."/>
            <person name="Masuho Y."/>
            <person name="Yamashita R."/>
            <person name="Nakai K."/>
            <person name="Yada T."/>
            <person name="Nakamura Y."/>
            <person name="Ohara O."/>
            <person name="Isogai T."/>
            <person name="Sugano S."/>
        </authorList>
    </citation>
    <scope>NUCLEOTIDE SEQUENCE [LARGE SCALE MRNA] (ISOFORM 2)</scope>
</reference>
<reference key="2">
    <citation type="journal article" date="2005" name="Nature">
        <title>Generation and annotation of the DNA sequences of human chromosomes 2 and 4.</title>
        <authorList>
            <person name="Hillier L.W."/>
            <person name="Graves T.A."/>
            <person name="Fulton R.S."/>
            <person name="Fulton L.A."/>
            <person name="Pepin K.H."/>
            <person name="Minx P."/>
            <person name="Wagner-McPherson C."/>
            <person name="Layman D."/>
            <person name="Wylie K."/>
            <person name="Sekhon M."/>
            <person name="Becker M.C."/>
            <person name="Fewell G.A."/>
            <person name="Delehaunty K.D."/>
            <person name="Miner T.L."/>
            <person name="Nash W.E."/>
            <person name="Kremitzki C."/>
            <person name="Oddy L."/>
            <person name="Du H."/>
            <person name="Sun H."/>
            <person name="Bradshaw-Cordum H."/>
            <person name="Ali J."/>
            <person name="Carter J."/>
            <person name="Cordes M."/>
            <person name="Harris A."/>
            <person name="Isak A."/>
            <person name="van Brunt A."/>
            <person name="Nguyen C."/>
            <person name="Du F."/>
            <person name="Courtney L."/>
            <person name="Kalicki J."/>
            <person name="Ozersky P."/>
            <person name="Abbott S."/>
            <person name="Armstrong J."/>
            <person name="Belter E.A."/>
            <person name="Caruso L."/>
            <person name="Cedroni M."/>
            <person name="Cotton M."/>
            <person name="Davidson T."/>
            <person name="Desai A."/>
            <person name="Elliott G."/>
            <person name="Erb T."/>
            <person name="Fronick C."/>
            <person name="Gaige T."/>
            <person name="Haakenson W."/>
            <person name="Haglund K."/>
            <person name="Holmes A."/>
            <person name="Harkins R."/>
            <person name="Kim K."/>
            <person name="Kruchowski S.S."/>
            <person name="Strong C.M."/>
            <person name="Grewal N."/>
            <person name="Goyea E."/>
            <person name="Hou S."/>
            <person name="Levy A."/>
            <person name="Martinka S."/>
            <person name="Mead K."/>
            <person name="McLellan M.D."/>
            <person name="Meyer R."/>
            <person name="Randall-Maher J."/>
            <person name="Tomlinson C."/>
            <person name="Dauphin-Kohlberg S."/>
            <person name="Kozlowicz-Reilly A."/>
            <person name="Shah N."/>
            <person name="Swearengen-Shahid S."/>
            <person name="Snider J."/>
            <person name="Strong J.T."/>
            <person name="Thompson J."/>
            <person name="Yoakum M."/>
            <person name="Leonard S."/>
            <person name="Pearman C."/>
            <person name="Trani L."/>
            <person name="Radionenko M."/>
            <person name="Waligorski J.E."/>
            <person name="Wang C."/>
            <person name="Rock S.M."/>
            <person name="Tin-Wollam A.-M."/>
            <person name="Maupin R."/>
            <person name="Latreille P."/>
            <person name="Wendl M.C."/>
            <person name="Yang S.-P."/>
            <person name="Pohl C."/>
            <person name="Wallis J.W."/>
            <person name="Spieth J."/>
            <person name="Bieri T.A."/>
            <person name="Berkowicz N."/>
            <person name="Nelson J.O."/>
            <person name="Osborne J."/>
            <person name="Ding L."/>
            <person name="Meyer R."/>
            <person name="Sabo A."/>
            <person name="Shotland Y."/>
            <person name="Sinha P."/>
            <person name="Wohldmann P.E."/>
            <person name="Cook L.L."/>
            <person name="Hickenbotham M.T."/>
            <person name="Eldred J."/>
            <person name="Williams D."/>
            <person name="Jones T.A."/>
            <person name="She X."/>
            <person name="Ciccarelli F.D."/>
            <person name="Izaurralde E."/>
            <person name="Taylor J."/>
            <person name="Schmutz J."/>
            <person name="Myers R.M."/>
            <person name="Cox D.R."/>
            <person name="Huang X."/>
            <person name="McPherson J.D."/>
            <person name="Mardis E.R."/>
            <person name="Clifton S.W."/>
            <person name="Warren W.C."/>
            <person name="Chinwalla A.T."/>
            <person name="Eddy S.R."/>
            <person name="Marra M.A."/>
            <person name="Ovcharenko I."/>
            <person name="Furey T.S."/>
            <person name="Miller W."/>
            <person name="Eichler E.E."/>
            <person name="Bork P."/>
            <person name="Suyama M."/>
            <person name="Torrents D."/>
            <person name="Waterston R.H."/>
            <person name="Wilson R.K."/>
        </authorList>
    </citation>
    <scope>NUCLEOTIDE SEQUENCE [LARGE SCALE GENOMIC DNA]</scope>
</reference>
<reference key="3">
    <citation type="submission" date="2005-09" db="EMBL/GenBank/DDBJ databases">
        <authorList>
            <person name="Mural R.J."/>
            <person name="Istrail S."/>
            <person name="Sutton G.G."/>
            <person name="Florea L."/>
            <person name="Halpern A.L."/>
            <person name="Mobarry C.M."/>
            <person name="Lippert R."/>
            <person name="Walenz B."/>
            <person name="Shatkay H."/>
            <person name="Dew I."/>
            <person name="Miller J.R."/>
            <person name="Flanigan M.J."/>
            <person name="Edwards N.J."/>
            <person name="Bolanos R."/>
            <person name="Fasulo D."/>
            <person name="Halldorsson B.V."/>
            <person name="Hannenhalli S."/>
            <person name="Turner R."/>
            <person name="Yooseph S."/>
            <person name="Lu F."/>
            <person name="Nusskern D.R."/>
            <person name="Shue B.C."/>
            <person name="Zheng X.H."/>
            <person name="Zhong F."/>
            <person name="Delcher A.L."/>
            <person name="Huson D.H."/>
            <person name="Kravitz S.A."/>
            <person name="Mouchard L."/>
            <person name="Reinert K."/>
            <person name="Remington K.A."/>
            <person name="Clark A.G."/>
            <person name="Waterman M.S."/>
            <person name="Eichler E.E."/>
            <person name="Adams M.D."/>
            <person name="Hunkapiller M.W."/>
            <person name="Myers E.W."/>
            <person name="Venter J.C."/>
        </authorList>
    </citation>
    <scope>NUCLEOTIDE SEQUENCE [LARGE SCALE GENOMIC DNA]</scope>
</reference>
<reference key="4">
    <citation type="journal article" date="2004" name="Genome Res.">
        <title>The status, quality, and expansion of the NIH full-length cDNA project: the Mammalian Gene Collection (MGC).</title>
        <authorList>
            <consortium name="The MGC Project Team"/>
        </authorList>
    </citation>
    <scope>NUCLEOTIDE SEQUENCE [LARGE SCALE MRNA] (ISOFORM 1)</scope>
    <source>
        <tissue>Liver</tissue>
    </source>
</reference>
<reference key="5">
    <citation type="journal article" date="2017" name="J. Biol. Chem.">
        <title>Three distinct 3-methylcytidine (m3C) methyltransferases modify tRNA and mRNA in mice and humans.</title>
        <authorList>
            <person name="Xu L."/>
            <person name="Liu X."/>
            <person name="Sheng N."/>
            <person name="Oo K.S."/>
            <person name="Liang J."/>
            <person name="Chionh Y.H."/>
            <person name="Xu J."/>
            <person name="Ye F."/>
            <person name="Gao Y.G."/>
            <person name="Dedon P.C."/>
            <person name="Fu X.Y."/>
        </authorList>
    </citation>
    <scope>FUNCTION</scope>
    <scope>CATALYTIC ACTIVITY</scope>
</reference>
<reference key="6">
    <citation type="journal article" date="2020" name="IScience">
        <title>The SUMOylated METTL8 induces R-loop and tumorigenesis via m3C.</title>
        <authorList>
            <person name="Zhang L.H."/>
            <person name="Zhang X.Y."/>
            <person name="Hu T."/>
            <person name="Chen X.Y."/>
            <person name="Li J.J."/>
            <person name="Raida M."/>
            <person name="Sun N."/>
            <person name="Luo Y."/>
            <person name="Gao X."/>
        </authorList>
    </citation>
    <scope>SUMOYLATION AT LYS-80</scope>
    <scope>MUTAGENESIS OF LYS-80</scope>
</reference>
<reference key="7">
    <citation type="journal article" date="2021" name="Mol. Cell">
        <title>Balancing of mitochondrial translation through METTL8-mediated m3C modification of mitochondrial tRNAs.</title>
        <authorList>
            <person name="Schoeller E."/>
            <person name="Marks J."/>
            <person name="Marchand V."/>
            <person name="Bruckmann A."/>
            <person name="Powell C.A."/>
            <person name="Reichold M."/>
            <person name="Mutti C.D."/>
            <person name="Dettmer K."/>
            <person name="Feederle R."/>
            <person name="Huettelmaier S."/>
            <person name="Helm M."/>
            <person name="Oefner P."/>
            <person name="Minczuk M."/>
            <person name="Motorin Y."/>
            <person name="Hafner M."/>
            <person name="Meister G."/>
        </authorList>
    </citation>
    <scope>FUNCTION</scope>
    <scope>CATALYTIC ACTIVITY</scope>
    <scope>SUBCELLULAR LOCATION</scope>
    <scope>MUTAGENESIS OF ILE-4; ILE-9 AND ASP-230</scope>
</reference>
<reference key="8">
    <citation type="journal article" date="2021" name="Nucleic Acids Res.">
        <title>Nucleotide resolution profiling of m3C RNA modification by HAC-seq.</title>
        <authorList>
            <person name="Cui J."/>
            <person name="Liu Q."/>
            <person name="Sendinc E."/>
            <person name="Shi Y."/>
            <person name="Gregory R.I."/>
        </authorList>
    </citation>
    <scope>FUNCTION</scope>
    <scope>CAUTION</scope>
</reference>
<reference key="9">
    <citation type="journal article" date="2022" name="Nat. Commun.">
        <title>The RNA methyltransferase METTL8 installs m3C32 in mitochondrial tRNAsThr/Ser(UCN) to optimise tRNA structure and mitochondrial translation.</title>
        <authorList>
            <person name="Kleiber N."/>
            <person name="Lemus-Diaz N."/>
            <person name="Stiller C."/>
            <person name="Heinrichs M."/>
            <person name="Mai M.M."/>
            <person name="Hackert P."/>
            <person name="Richter-Dennerlein R."/>
            <person name="Hoebartner C."/>
            <person name="Bohnsack K.E."/>
            <person name="Bohnsack M.T."/>
        </authorList>
    </citation>
    <scope>FUNCTION</scope>
    <scope>CATALYTIC ACTIVITY</scope>
    <scope>SUBCELLULAR LOCATION</scope>
    <scope>MUTAGENESIS OF ASP-230</scope>
</reference>
<protein>
    <recommendedName>
        <fullName evidence="12">tRNA N(3)-cytidine methyltransferase METTL8, mitochondrial</fullName>
        <ecNumber evidence="8 9">2.1.1.-</ecNumber>
    </recommendedName>
    <alternativeName>
        <fullName evidence="12">Methyltransferase-like protein 8</fullName>
    </alternativeName>
    <alternativeName>
        <fullName evidence="12">mRNA N(3)-methylcytidine methyltransferase METTL8</fullName>
        <ecNumber evidence="13">2.1.1.-</ecNumber>
    </alternativeName>
</protein>
<gene>
    <name evidence="11 14" type="primary">METTL8</name>
</gene>
<proteinExistence type="evidence at protein level"/>
<organism>
    <name type="scientific">Homo sapiens</name>
    <name type="common">Human</name>
    <dbReference type="NCBI Taxonomy" id="9606"/>
    <lineage>
        <taxon>Eukaryota</taxon>
        <taxon>Metazoa</taxon>
        <taxon>Chordata</taxon>
        <taxon>Craniata</taxon>
        <taxon>Vertebrata</taxon>
        <taxon>Euteleostomi</taxon>
        <taxon>Mammalia</taxon>
        <taxon>Eutheria</taxon>
        <taxon>Euarchontoglires</taxon>
        <taxon>Primates</taxon>
        <taxon>Haplorrhini</taxon>
        <taxon>Catarrhini</taxon>
        <taxon>Hominidae</taxon>
        <taxon>Homo</taxon>
    </lineage>
</organism>
<dbReference type="EC" id="2.1.1.-" evidence="8 9 13"/>
<dbReference type="EMBL" id="AK024046">
    <property type="protein sequence ID" value="BAB14797.1"/>
    <property type="molecule type" value="mRNA"/>
</dbReference>
<dbReference type="EMBL" id="AC008065">
    <property type="protein sequence ID" value="AAX93077.1"/>
    <property type="status" value="ALT_SEQ"/>
    <property type="molecule type" value="Genomic_DNA"/>
</dbReference>
<dbReference type="EMBL" id="AC007739">
    <property type="protein sequence ID" value="AAX93284.1"/>
    <property type="molecule type" value="Genomic_DNA"/>
</dbReference>
<dbReference type="EMBL" id="CH471058">
    <property type="protein sequence ID" value="EAX11215.1"/>
    <property type="molecule type" value="Genomic_DNA"/>
</dbReference>
<dbReference type="EMBL" id="BC025250">
    <property type="protein sequence ID" value="AAH25250.1"/>
    <property type="status" value="ALT_INIT"/>
    <property type="molecule type" value="mRNA"/>
</dbReference>
<dbReference type="CCDS" id="CCDS82531.1">
    <molecule id="Q9H825-2"/>
</dbReference>
<dbReference type="CCDS" id="CCDS82532.1">
    <molecule id="Q9H825-1"/>
</dbReference>
<dbReference type="RefSeq" id="NP_001308083.1">
    <property type="nucleotide sequence ID" value="NM_001321154.1"/>
</dbReference>
<dbReference type="RefSeq" id="NP_001308084.1">
    <property type="nucleotide sequence ID" value="NM_001321155.1"/>
</dbReference>
<dbReference type="RefSeq" id="NP_001308085.1">
    <property type="nucleotide sequence ID" value="NM_001321156.1"/>
</dbReference>
<dbReference type="RefSeq" id="NP_001308086.1">
    <property type="nucleotide sequence ID" value="NM_001321157.1"/>
</dbReference>
<dbReference type="RefSeq" id="NP_001308088.1">
    <property type="nucleotide sequence ID" value="NM_001321159.1"/>
</dbReference>
<dbReference type="RefSeq" id="NP_001308089.1">
    <molecule id="Q9H825-1"/>
    <property type="nucleotide sequence ID" value="NM_001321160.2"/>
</dbReference>
<dbReference type="RefSeq" id="NP_001308091.1">
    <molecule id="Q9H825-2"/>
    <property type="nucleotide sequence ID" value="NM_001321162.2"/>
</dbReference>
<dbReference type="SMR" id="Q9H825"/>
<dbReference type="FunCoup" id="Q9H825">
    <property type="interactions" value="896"/>
</dbReference>
<dbReference type="IntAct" id="Q9H825">
    <property type="interactions" value="7"/>
</dbReference>
<dbReference type="STRING" id="9606.ENSP00000480056"/>
<dbReference type="GlyGen" id="Q9H825">
    <property type="glycosylation" value="1 site, 1 O-linked glycan (1 site)"/>
</dbReference>
<dbReference type="iPTMnet" id="Q9H825"/>
<dbReference type="PhosphoSitePlus" id="Q9H825"/>
<dbReference type="BioMuta" id="METTL8"/>
<dbReference type="DMDM" id="160410001"/>
<dbReference type="jPOST" id="Q9H825"/>
<dbReference type="MassIVE" id="Q9H825"/>
<dbReference type="PaxDb" id="9606-ENSP00000480056"/>
<dbReference type="PeptideAtlas" id="Q9H825"/>
<dbReference type="ProteomicsDB" id="81171">
    <molecule id="Q9H825-1"/>
</dbReference>
<dbReference type="ProteomicsDB" id="81172">
    <molecule id="Q9H825-2"/>
</dbReference>
<dbReference type="Pumba" id="Q9H825"/>
<dbReference type="DNASU" id="79828"/>
<dbReference type="Ensembl" id="ENST00000392604.6">
    <molecule id="Q9H825-1"/>
    <property type="protein sequence ID" value="ENSP00000376382.2"/>
    <property type="gene ID" value="ENSG00000123600.21"/>
</dbReference>
<dbReference type="Ensembl" id="ENST00000447486.5">
    <molecule id="Q9H825-2"/>
    <property type="protein sequence ID" value="ENSP00000409025.1"/>
    <property type="gene ID" value="ENSG00000123600.21"/>
</dbReference>
<dbReference type="GeneID" id="79828"/>
<dbReference type="KEGG" id="hsa:79828"/>
<dbReference type="UCSC" id="uc002ugs.5">
    <molecule id="Q9H825-1"/>
    <property type="organism name" value="human"/>
</dbReference>
<dbReference type="AGR" id="HGNC:25856"/>
<dbReference type="CTD" id="79828"/>
<dbReference type="DisGeNET" id="79828"/>
<dbReference type="GeneCards" id="METTL8"/>
<dbReference type="HGNC" id="HGNC:25856">
    <property type="gene designation" value="METTL8"/>
</dbReference>
<dbReference type="MalaCards" id="METTL8"/>
<dbReference type="MIM" id="609525">
    <property type="type" value="gene"/>
</dbReference>
<dbReference type="neXtProt" id="NX_Q9H825"/>
<dbReference type="OpenTargets" id="ENSG00000123600"/>
<dbReference type="VEuPathDB" id="HostDB:ENSG00000123600"/>
<dbReference type="eggNOG" id="KOG2361">
    <property type="taxonomic scope" value="Eukaryota"/>
</dbReference>
<dbReference type="GeneTree" id="ENSGT00940000159683"/>
<dbReference type="HOGENOM" id="CLU_029724_0_0_1"/>
<dbReference type="InParanoid" id="Q9H825"/>
<dbReference type="OrthoDB" id="417697at2759"/>
<dbReference type="PAN-GO" id="Q9H825">
    <property type="GO annotations" value="1 GO annotation based on evolutionary models"/>
</dbReference>
<dbReference type="PhylomeDB" id="Q9H825"/>
<dbReference type="PathwayCommons" id="Q9H825"/>
<dbReference type="BioGRID-ORCS" id="79828">
    <property type="hits" value="5 hits in 306 CRISPR screens"/>
</dbReference>
<dbReference type="ChiTaRS" id="METTL8">
    <property type="organism name" value="human"/>
</dbReference>
<dbReference type="GenomeRNAi" id="79828"/>
<dbReference type="Pharos" id="Q9H825">
    <property type="development level" value="Tdark"/>
</dbReference>
<dbReference type="PRO" id="PR:Q9H825"/>
<dbReference type="Proteomes" id="UP000005640">
    <property type="component" value="Chromosome 2"/>
</dbReference>
<dbReference type="RNAct" id="Q9H825">
    <property type="molecule type" value="protein"/>
</dbReference>
<dbReference type="Bgee" id="ENSG00000123600">
    <property type="expression patterns" value="Expressed in primordial germ cell in gonad and 188 other cell types or tissues"/>
</dbReference>
<dbReference type="ExpressionAtlas" id="Q9H825">
    <property type="expression patterns" value="baseline and differential"/>
</dbReference>
<dbReference type="GO" id="GO:0005759">
    <property type="term" value="C:mitochondrial matrix"/>
    <property type="evidence" value="ECO:0000314"/>
    <property type="project" value="UniProtKB"/>
</dbReference>
<dbReference type="GO" id="GO:0005739">
    <property type="term" value="C:mitochondrion"/>
    <property type="evidence" value="ECO:0000314"/>
    <property type="project" value="UniProtKB"/>
</dbReference>
<dbReference type="GO" id="GO:0008174">
    <property type="term" value="F:mRNA methyltransferase activity"/>
    <property type="evidence" value="ECO:0000315"/>
    <property type="project" value="UniProtKB"/>
</dbReference>
<dbReference type="GO" id="GO:0052735">
    <property type="term" value="F:tRNA (cytidine-3-)-methyltransferase activity"/>
    <property type="evidence" value="ECO:0000314"/>
    <property type="project" value="UniProtKB"/>
</dbReference>
<dbReference type="GO" id="GO:0070900">
    <property type="term" value="P:mitochondrial tRNA modification"/>
    <property type="evidence" value="ECO:0000314"/>
    <property type="project" value="UniProt"/>
</dbReference>
<dbReference type="GO" id="GO:0016071">
    <property type="term" value="P:mRNA metabolic process"/>
    <property type="evidence" value="ECO:0000315"/>
    <property type="project" value="UniProtKB"/>
</dbReference>
<dbReference type="GO" id="GO:0070131">
    <property type="term" value="P:positive regulation of mitochondrial translation"/>
    <property type="evidence" value="ECO:0000314"/>
    <property type="project" value="UniProtKB"/>
</dbReference>
<dbReference type="GO" id="GO:0106217">
    <property type="term" value="P:tRNA C3-cytosine methylation"/>
    <property type="evidence" value="ECO:0000314"/>
    <property type="project" value="UniProtKB"/>
</dbReference>
<dbReference type="CDD" id="cd02440">
    <property type="entry name" value="AdoMet_MTases"/>
    <property type="match status" value="1"/>
</dbReference>
<dbReference type="FunFam" id="3.40.50.150:FF:000355">
    <property type="entry name" value="Methyltransferase like 8"/>
    <property type="match status" value="1"/>
</dbReference>
<dbReference type="Gene3D" id="3.40.50.150">
    <property type="entry name" value="Vaccinia Virus protein VP39"/>
    <property type="match status" value="1"/>
</dbReference>
<dbReference type="InterPro" id="IPR041698">
    <property type="entry name" value="Methyltransf_25"/>
</dbReference>
<dbReference type="InterPro" id="IPR026113">
    <property type="entry name" value="METTL2/6/8-like"/>
</dbReference>
<dbReference type="InterPro" id="IPR029063">
    <property type="entry name" value="SAM-dependent_MTases_sf"/>
</dbReference>
<dbReference type="PANTHER" id="PTHR22809">
    <property type="entry name" value="METHYLTRANSFERASE-RELATED"/>
    <property type="match status" value="1"/>
</dbReference>
<dbReference type="PANTHER" id="PTHR22809:SF3">
    <property type="entry name" value="TRNA N(3)-METHYLCYTIDINE METHYLTRANSFERASE"/>
    <property type="match status" value="1"/>
</dbReference>
<dbReference type="Pfam" id="PF13649">
    <property type="entry name" value="Methyltransf_25"/>
    <property type="match status" value="1"/>
</dbReference>
<dbReference type="SUPFAM" id="SSF53335">
    <property type="entry name" value="S-adenosyl-L-methionine-dependent methyltransferases"/>
    <property type="match status" value="1"/>
</dbReference>
<accession>Q9H825</accession>
<accession>Q53TM9</accession>
<accession>Q53TQ0</accession>
<evidence type="ECO:0000250" key="1">
    <source>
        <dbReference type="UniProtKB" id="A2AUU0"/>
    </source>
</evidence>
<evidence type="ECO:0000250" key="2">
    <source>
        <dbReference type="UniProtKB" id="Q8TCB7"/>
    </source>
</evidence>
<evidence type="ECO:0000255" key="3"/>
<evidence type="ECO:0000256" key="4">
    <source>
        <dbReference type="SAM" id="MobiDB-lite"/>
    </source>
</evidence>
<evidence type="ECO:0000269" key="5">
    <source>
    </source>
</evidence>
<evidence type="ECO:0000269" key="6">
    <source>
    </source>
</evidence>
<evidence type="ECO:0000269" key="7">
    <source>
    </source>
</evidence>
<evidence type="ECO:0000269" key="8">
    <source>
    </source>
</evidence>
<evidence type="ECO:0000269" key="9">
    <source>
    </source>
</evidence>
<evidence type="ECO:0000303" key="10">
    <source>
    </source>
</evidence>
<evidence type="ECO:0000303" key="11">
    <source>
    </source>
</evidence>
<evidence type="ECO:0000305" key="12"/>
<evidence type="ECO:0000305" key="13">
    <source>
    </source>
</evidence>
<evidence type="ECO:0000312" key="14">
    <source>
        <dbReference type="HGNC" id="HGNC:25856"/>
    </source>
</evidence>
<sequence length="291" mass="33387">MNMIWRNSISCLRLGKVPHRYQSGYHPVAPLGSRILTDPAKVFEHNMWDHMQWSKEEEAAARKKVKENSAVRVLLEEQVKYEREASKYWDTFYKIHKNKFFKDRNWLLREFPEILPVDQKPEEKARESSWDHVKTSATNRFSRMHCPTVPDEKNHYEKSSGSSEGQSKTESDFSNLDSEKHKKGPMETGLFPGSNATFRILEVGCGAGNSVFPILNTLENSPESFLYCCDFASGAVELVKSHSSYRATQCFAFVHDVCDDGLPYPFPDGILDVILLVFVLSSIHPDRTLFI</sequence>
<feature type="transit peptide" description="Mitochondrion" evidence="3">
    <location>
        <begin position="1"/>
        <end position="21"/>
    </location>
</feature>
<feature type="chain" id="PRO_0000311291" description="tRNA N(3)-cytidine methyltransferase METTL8, mitochondrial" evidence="3">
    <location>
        <begin position="22"/>
        <end position="291"/>
    </location>
</feature>
<feature type="region of interest" description="Disordered" evidence="4">
    <location>
        <begin position="141"/>
        <end position="187"/>
    </location>
</feature>
<feature type="compositionally biased region" description="Low complexity" evidence="4">
    <location>
        <begin position="159"/>
        <end position="168"/>
    </location>
</feature>
<feature type="binding site" evidence="2">
    <location>
        <position position="89"/>
    </location>
    <ligand>
        <name>S-adenosyl-L-methionine</name>
        <dbReference type="ChEBI" id="CHEBI:59789"/>
    </ligand>
</feature>
<feature type="binding site" evidence="2">
    <location>
        <position position="93"/>
    </location>
    <ligand>
        <name>S-adenosyl-L-methionine</name>
        <dbReference type="ChEBI" id="CHEBI:59789"/>
    </ligand>
</feature>
<feature type="binding site" evidence="2">
    <location>
        <position position="204"/>
    </location>
    <ligand>
        <name>S-adenosyl-L-methionine</name>
        <dbReference type="ChEBI" id="CHEBI:59789"/>
    </ligand>
</feature>
<feature type="binding site" evidence="2">
    <location>
        <position position="230"/>
    </location>
    <ligand>
        <name>S-adenosyl-L-methionine</name>
        <dbReference type="ChEBI" id="CHEBI:59789"/>
    </ligand>
</feature>
<feature type="binding site" evidence="2">
    <location>
        <position position="256"/>
    </location>
    <ligand>
        <name>S-adenosyl-L-methionine</name>
        <dbReference type="ChEBI" id="CHEBI:59789"/>
    </ligand>
</feature>
<feature type="cross-link" description="Glycyl lysine isopeptide (Lys-Gly) (interchain with G-Cter in SUMO)" evidence="6">
    <location>
        <position position="80"/>
    </location>
</feature>
<feature type="splice variant" id="VSP_029514" description="In isoform 2." evidence="10">
    <location>
        <begin position="1"/>
        <end position="50"/>
    </location>
</feature>
<feature type="mutagenesis site" description="Partial relocalization to the cytoplasm; when associated with Q-9." evidence="8">
    <original>I</original>
    <variation>Q</variation>
    <location>
        <position position="4"/>
    </location>
</feature>
<feature type="mutagenesis site" description="Partial relocalization to the cytoplasm; when associated with Q-4." evidence="8">
    <original>I</original>
    <variation>Q</variation>
    <location>
        <position position="9"/>
    </location>
</feature>
<feature type="mutagenesis site" description="Abolished SUMOylation." evidence="6">
    <original>K</original>
    <variation>R</variation>
    <location>
        <position position="80"/>
    </location>
</feature>
<feature type="mutagenesis site" description="Abolished N(3)-methylcytidine methyltransferase activity." evidence="8 9">
    <original>D</original>
    <variation>A</variation>
    <location>
        <position position="230"/>
    </location>
</feature>
<keyword id="KW-0025">Alternative splicing</keyword>
<keyword id="KW-1017">Isopeptide bond</keyword>
<keyword id="KW-0489">Methyltransferase</keyword>
<keyword id="KW-0496">Mitochondrion</keyword>
<keyword id="KW-1267">Proteomics identification</keyword>
<keyword id="KW-1185">Reference proteome</keyword>
<keyword id="KW-0949">S-adenosyl-L-methionine</keyword>
<keyword id="KW-0808">Transferase</keyword>
<keyword id="KW-0809">Transit peptide</keyword>
<keyword id="KW-0819">tRNA processing</keyword>
<keyword id="KW-0832">Ubl conjugation</keyword>